<dbReference type="EMBL" id="S40180">
    <property type="protein sequence ID" value="AAB22541.1"/>
    <property type="molecule type" value="Genomic_RNA"/>
</dbReference>
<dbReference type="EMBL" id="M60181">
    <property type="protein sequence ID" value="AAA46634.1"/>
    <property type="molecule type" value="Genomic_RNA"/>
</dbReference>
<dbReference type="PIR" id="JQ1636">
    <property type="entry name" value="JQ1636"/>
</dbReference>
<dbReference type="SMR" id="P22175"/>
<dbReference type="OrthoDB" id="9969at10239"/>
<dbReference type="Proteomes" id="UP000234995">
    <property type="component" value="Genome"/>
</dbReference>
<dbReference type="GO" id="GO:0030430">
    <property type="term" value="C:host cell cytoplasm"/>
    <property type="evidence" value="ECO:0007669"/>
    <property type="project" value="UniProtKB-SubCell"/>
</dbReference>
<dbReference type="InterPro" id="IPR006960">
    <property type="entry name" value="Major_non-capsid_tenuivirus"/>
</dbReference>
<dbReference type="Pfam" id="PF04876">
    <property type="entry name" value="Tenui_NCP"/>
    <property type="match status" value="1"/>
</dbReference>
<proteinExistence type="evidence at protein level"/>
<protein>
    <recommendedName>
        <fullName>Major non-capsid protein</fullName>
        <shortName>NCP</shortName>
    </recommendedName>
    <alternativeName>
        <fullName>Protein p4</fullName>
    </alternativeName>
    <alternativeName>
        <fullName>Stripe disease-specific protein</fullName>
        <shortName>Protein S</shortName>
    </alternativeName>
</protein>
<organismHost>
    <name type="scientific">Rottboellia</name>
    <dbReference type="NCBI Taxonomy" id="300124"/>
</organismHost>
<organismHost>
    <name type="scientific">Sorghum bicolor</name>
    <name type="common">Sorghum</name>
    <name type="synonym">Sorghum vulgare</name>
    <dbReference type="NCBI Taxonomy" id="4558"/>
</organismHost>
<organismHost>
    <name type="scientific">Zea mays</name>
    <name type="common">Maize</name>
    <dbReference type="NCBI Taxonomy" id="4577"/>
</organismHost>
<evidence type="ECO:0000250" key="1"/>
<evidence type="ECO:0000305" key="2"/>
<keyword id="KW-0903">Direct protein sequencing</keyword>
<keyword id="KW-1035">Host cytoplasm</keyword>
<comment type="function">
    <text evidence="1">Induces the formation of large intracellular inclusion body, organized in amorphous and crystalline arrays. Presumably the main cause of the stripe disease observed in host (By similarity).</text>
</comment>
<comment type="subcellular location">
    <subcellularLocation>
        <location evidence="1">Host cytoplasm</location>
    </subcellularLocation>
</comment>
<comment type="similarity">
    <text evidence="2">Belongs to the tenuiviruses NCP family.</text>
</comment>
<feature type="chain" id="PRO_0000222524" description="Major non-capsid protein">
    <location>
        <begin position="1"/>
        <end position="176"/>
    </location>
</feature>
<name>NCP_MSTV</name>
<reference key="1">
    <citation type="journal article" date="1990" name="Virology">
        <title>Identification and sequence analysis of the maize stripe virus major noncapsid protein gene.</title>
        <authorList>
            <person name="Huiet L."/>
            <person name="Klaassen V."/>
            <person name="Tsai J.H."/>
            <person name="Falk B.W."/>
        </authorList>
    </citation>
    <scope>NUCLEOTIDE SEQUENCE [GENOMIC RNA]</scope>
    <scope>PROTEIN SEQUENCE OF 68-79</scope>
</reference>
<reference key="2">
    <citation type="journal article" date="1992" name="J. Gen. Virol.">
        <title>Complete sequence of maize stripe virus RNA4 and mapping of its subgenomic RNAs.</title>
        <authorList>
            <person name="Huiet L."/>
            <person name="Tsai J.H."/>
            <person name="Falk B.W."/>
        </authorList>
    </citation>
    <scope>NUCLEOTIDE SEQUENCE [GENOMIC RNA]</scope>
</reference>
<organism>
    <name type="scientific">Maize stripe virus</name>
    <name type="common">MStV</name>
    <dbReference type="NCBI Taxonomy" id="3052767"/>
    <lineage>
        <taxon>Viruses</taxon>
        <taxon>Riboviria</taxon>
        <taxon>Orthornavirae</taxon>
        <taxon>Negarnaviricota</taxon>
        <taxon>Polyploviricotina</taxon>
        <taxon>Ellioviricetes</taxon>
        <taxon>Bunyavirales</taxon>
        <taxon>Phenuiviridae</taxon>
        <taxon>Tenuivirus</taxon>
    </lineage>
</organism>
<sequence length="176" mass="19959">MQRSADVSIGPITGLNYTDLYDSLPSSVSDNITLLDLKEPERVTEATKKLILKGCVETAYHHPLETDPLFASVHKHLPDFCHSFLEHLLGGEQDENSLIDIGEFFKLLQPSLGDWITKYYLKHPNKMSGIQIKTLLNQIINMAKAESSDTETYEKVWKKMPSYFSIVLTPLLHKVV</sequence>
<accession>P22175</accession>
<gene>
    <name type="ORF">p4</name>
</gene>